<protein>
    <recommendedName>
        <fullName evidence="1">Large ribosomal subunit protein bL21</fullName>
    </recommendedName>
    <alternativeName>
        <fullName evidence="2">50S ribosomal protein L21</fullName>
    </alternativeName>
</protein>
<comment type="function">
    <text evidence="1">This protein binds to 23S rRNA in the presence of protein L20.</text>
</comment>
<comment type="subunit">
    <text evidence="1">Part of the 50S ribosomal subunit. Contacts protein L20.</text>
</comment>
<comment type="similarity">
    <text evidence="1">Belongs to the bacterial ribosomal protein bL21 family.</text>
</comment>
<accession>A8L1V8</accession>
<sequence length="105" mass="11126">MYAVVASGGKQHRVAVGDVVDVELLSGEPGAAVNLPAVLLVDGESVTHDADALASVEVTAEVVGVVKGPKIRIHKFKNKTGYHKRQGHRQKYTRLKVTGIETGKA</sequence>
<name>RL21_PARS2</name>
<feature type="chain" id="PRO_1000143801" description="Large ribosomal subunit protein bL21">
    <location>
        <begin position="1"/>
        <end position="105"/>
    </location>
</feature>
<keyword id="KW-0687">Ribonucleoprotein</keyword>
<keyword id="KW-0689">Ribosomal protein</keyword>
<keyword id="KW-0694">RNA-binding</keyword>
<keyword id="KW-0699">rRNA-binding</keyword>
<organism>
    <name type="scientific">Parafrankia sp. (strain EAN1pec)</name>
    <dbReference type="NCBI Taxonomy" id="298653"/>
    <lineage>
        <taxon>Bacteria</taxon>
        <taxon>Bacillati</taxon>
        <taxon>Actinomycetota</taxon>
        <taxon>Actinomycetes</taxon>
        <taxon>Frankiales</taxon>
        <taxon>Frankiaceae</taxon>
        <taxon>Parafrankia</taxon>
    </lineage>
</organism>
<dbReference type="EMBL" id="CP000820">
    <property type="protein sequence ID" value="ABW14618.1"/>
    <property type="molecule type" value="Genomic_DNA"/>
</dbReference>
<dbReference type="RefSeq" id="WP_020462729.1">
    <property type="nucleotide sequence ID" value="NC_009921.1"/>
</dbReference>
<dbReference type="SMR" id="A8L1V8"/>
<dbReference type="STRING" id="298653.Franean1_5260"/>
<dbReference type="KEGG" id="fre:Franean1_5260"/>
<dbReference type="eggNOG" id="COG0261">
    <property type="taxonomic scope" value="Bacteria"/>
</dbReference>
<dbReference type="HOGENOM" id="CLU_061463_3_0_11"/>
<dbReference type="GO" id="GO:0005737">
    <property type="term" value="C:cytoplasm"/>
    <property type="evidence" value="ECO:0007669"/>
    <property type="project" value="UniProtKB-ARBA"/>
</dbReference>
<dbReference type="GO" id="GO:1990904">
    <property type="term" value="C:ribonucleoprotein complex"/>
    <property type="evidence" value="ECO:0007669"/>
    <property type="project" value="UniProtKB-KW"/>
</dbReference>
<dbReference type="GO" id="GO:0005840">
    <property type="term" value="C:ribosome"/>
    <property type="evidence" value="ECO:0007669"/>
    <property type="project" value="UniProtKB-KW"/>
</dbReference>
<dbReference type="GO" id="GO:0019843">
    <property type="term" value="F:rRNA binding"/>
    <property type="evidence" value="ECO:0007669"/>
    <property type="project" value="UniProtKB-UniRule"/>
</dbReference>
<dbReference type="GO" id="GO:0003735">
    <property type="term" value="F:structural constituent of ribosome"/>
    <property type="evidence" value="ECO:0007669"/>
    <property type="project" value="InterPro"/>
</dbReference>
<dbReference type="GO" id="GO:0006412">
    <property type="term" value="P:translation"/>
    <property type="evidence" value="ECO:0007669"/>
    <property type="project" value="UniProtKB-UniRule"/>
</dbReference>
<dbReference type="HAMAP" id="MF_01363">
    <property type="entry name" value="Ribosomal_bL21"/>
    <property type="match status" value="1"/>
</dbReference>
<dbReference type="InterPro" id="IPR028909">
    <property type="entry name" value="bL21-like"/>
</dbReference>
<dbReference type="InterPro" id="IPR036164">
    <property type="entry name" value="bL21-like_sf"/>
</dbReference>
<dbReference type="InterPro" id="IPR001787">
    <property type="entry name" value="Ribosomal_bL21"/>
</dbReference>
<dbReference type="InterPro" id="IPR018258">
    <property type="entry name" value="Ribosomal_bL21_CS"/>
</dbReference>
<dbReference type="NCBIfam" id="TIGR00061">
    <property type="entry name" value="L21"/>
    <property type="match status" value="1"/>
</dbReference>
<dbReference type="PANTHER" id="PTHR21349">
    <property type="entry name" value="50S RIBOSOMAL PROTEIN L21"/>
    <property type="match status" value="1"/>
</dbReference>
<dbReference type="PANTHER" id="PTHR21349:SF0">
    <property type="entry name" value="LARGE RIBOSOMAL SUBUNIT PROTEIN BL21M"/>
    <property type="match status" value="1"/>
</dbReference>
<dbReference type="Pfam" id="PF00829">
    <property type="entry name" value="Ribosomal_L21p"/>
    <property type="match status" value="1"/>
</dbReference>
<dbReference type="SUPFAM" id="SSF141091">
    <property type="entry name" value="L21p-like"/>
    <property type="match status" value="1"/>
</dbReference>
<dbReference type="PROSITE" id="PS01169">
    <property type="entry name" value="RIBOSOMAL_L21"/>
    <property type="match status" value="1"/>
</dbReference>
<gene>
    <name evidence="1" type="primary">rplU</name>
    <name type="ordered locus">Franean1_5260</name>
</gene>
<reference key="1">
    <citation type="journal article" date="2007" name="Genome Res.">
        <title>Genome characteristics of facultatively symbiotic Frankia sp. strains reflect host range and host plant biogeography.</title>
        <authorList>
            <person name="Normand P."/>
            <person name="Lapierre P."/>
            <person name="Tisa L.S."/>
            <person name="Gogarten J.P."/>
            <person name="Alloisio N."/>
            <person name="Bagnarol E."/>
            <person name="Bassi C.A."/>
            <person name="Berry A.M."/>
            <person name="Bickhart D.M."/>
            <person name="Choisne N."/>
            <person name="Couloux A."/>
            <person name="Cournoyer B."/>
            <person name="Cruveiller S."/>
            <person name="Daubin V."/>
            <person name="Demange N."/>
            <person name="Francino M.P."/>
            <person name="Goltsman E."/>
            <person name="Huang Y."/>
            <person name="Kopp O.R."/>
            <person name="Labarre L."/>
            <person name="Lapidus A."/>
            <person name="Lavire C."/>
            <person name="Marechal J."/>
            <person name="Martinez M."/>
            <person name="Mastronunzio J.E."/>
            <person name="Mullin B.C."/>
            <person name="Niemann J."/>
            <person name="Pujic P."/>
            <person name="Rawnsley T."/>
            <person name="Rouy Z."/>
            <person name="Schenowitz C."/>
            <person name="Sellstedt A."/>
            <person name="Tavares F."/>
            <person name="Tomkins J.P."/>
            <person name="Vallenet D."/>
            <person name="Valverde C."/>
            <person name="Wall L.G."/>
            <person name="Wang Y."/>
            <person name="Medigue C."/>
            <person name="Benson D.R."/>
        </authorList>
    </citation>
    <scope>NUCLEOTIDE SEQUENCE [LARGE SCALE GENOMIC DNA]</scope>
    <source>
        <strain>EAN1pec</strain>
    </source>
</reference>
<evidence type="ECO:0000255" key="1">
    <source>
        <dbReference type="HAMAP-Rule" id="MF_01363"/>
    </source>
</evidence>
<evidence type="ECO:0000305" key="2"/>
<proteinExistence type="inferred from homology"/>